<evidence type="ECO:0000255" key="1">
    <source>
        <dbReference type="HAMAP-Rule" id="MF_01201"/>
    </source>
</evidence>
<dbReference type="EC" id="5.1.1.1" evidence="1"/>
<dbReference type="EMBL" id="AM167904">
    <property type="protein sequence ID" value="CAJ50026.1"/>
    <property type="molecule type" value="Genomic_DNA"/>
</dbReference>
<dbReference type="RefSeq" id="WP_012418077.1">
    <property type="nucleotide sequence ID" value="NC_010645.1"/>
</dbReference>
<dbReference type="SMR" id="Q2KXU7"/>
<dbReference type="STRING" id="360910.BAV2416"/>
<dbReference type="GeneID" id="92934408"/>
<dbReference type="KEGG" id="bav:BAV2416"/>
<dbReference type="eggNOG" id="COG0787">
    <property type="taxonomic scope" value="Bacteria"/>
</dbReference>
<dbReference type="HOGENOM" id="CLU_028393_1_0_4"/>
<dbReference type="OrthoDB" id="9813814at2"/>
<dbReference type="UniPathway" id="UPA00042">
    <property type="reaction ID" value="UER00497"/>
</dbReference>
<dbReference type="Proteomes" id="UP000001977">
    <property type="component" value="Chromosome"/>
</dbReference>
<dbReference type="GO" id="GO:0005829">
    <property type="term" value="C:cytosol"/>
    <property type="evidence" value="ECO:0007669"/>
    <property type="project" value="TreeGrafter"/>
</dbReference>
<dbReference type="GO" id="GO:0008784">
    <property type="term" value="F:alanine racemase activity"/>
    <property type="evidence" value="ECO:0007669"/>
    <property type="project" value="UniProtKB-UniRule"/>
</dbReference>
<dbReference type="GO" id="GO:0030170">
    <property type="term" value="F:pyridoxal phosphate binding"/>
    <property type="evidence" value="ECO:0007669"/>
    <property type="project" value="UniProtKB-UniRule"/>
</dbReference>
<dbReference type="GO" id="GO:0030632">
    <property type="term" value="P:D-alanine biosynthetic process"/>
    <property type="evidence" value="ECO:0007669"/>
    <property type="project" value="UniProtKB-UniRule"/>
</dbReference>
<dbReference type="CDD" id="cd06827">
    <property type="entry name" value="PLPDE_III_AR_proteobact"/>
    <property type="match status" value="1"/>
</dbReference>
<dbReference type="FunFam" id="3.20.20.10:FF:000002">
    <property type="entry name" value="Alanine racemase"/>
    <property type="match status" value="1"/>
</dbReference>
<dbReference type="Gene3D" id="3.20.20.10">
    <property type="entry name" value="Alanine racemase"/>
    <property type="match status" value="1"/>
</dbReference>
<dbReference type="Gene3D" id="2.40.37.10">
    <property type="entry name" value="Lyase, Ornithine Decarboxylase, Chain A, domain 1"/>
    <property type="match status" value="1"/>
</dbReference>
<dbReference type="HAMAP" id="MF_01201">
    <property type="entry name" value="Ala_racemase"/>
    <property type="match status" value="1"/>
</dbReference>
<dbReference type="InterPro" id="IPR000821">
    <property type="entry name" value="Ala_racemase"/>
</dbReference>
<dbReference type="InterPro" id="IPR009006">
    <property type="entry name" value="Ala_racemase/Decarboxylase_C"/>
</dbReference>
<dbReference type="InterPro" id="IPR011079">
    <property type="entry name" value="Ala_racemase_C"/>
</dbReference>
<dbReference type="InterPro" id="IPR001608">
    <property type="entry name" value="Ala_racemase_N"/>
</dbReference>
<dbReference type="InterPro" id="IPR020622">
    <property type="entry name" value="Ala_racemase_pyridoxalP-BS"/>
</dbReference>
<dbReference type="InterPro" id="IPR029066">
    <property type="entry name" value="PLP-binding_barrel"/>
</dbReference>
<dbReference type="NCBIfam" id="TIGR00492">
    <property type="entry name" value="alr"/>
    <property type="match status" value="1"/>
</dbReference>
<dbReference type="PANTHER" id="PTHR30511">
    <property type="entry name" value="ALANINE RACEMASE"/>
    <property type="match status" value="1"/>
</dbReference>
<dbReference type="PANTHER" id="PTHR30511:SF0">
    <property type="entry name" value="ALANINE RACEMASE, CATABOLIC-RELATED"/>
    <property type="match status" value="1"/>
</dbReference>
<dbReference type="Pfam" id="PF00842">
    <property type="entry name" value="Ala_racemase_C"/>
    <property type="match status" value="1"/>
</dbReference>
<dbReference type="Pfam" id="PF01168">
    <property type="entry name" value="Ala_racemase_N"/>
    <property type="match status" value="1"/>
</dbReference>
<dbReference type="PRINTS" id="PR00992">
    <property type="entry name" value="ALARACEMASE"/>
</dbReference>
<dbReference type="SMART" id="SM01005">
    <property type="entry name" value="Ala_racemase_C"/>
    <property type="match status" value="1"/>
</dbReference>
<dbReference type="SUPFAM" id="SSF50621">
    <property type="entry name" value="Alanine racemase C-terminal domain-like"/>
    <property type="match status" value="1"/>
</dbReference>
<dbReference type="SUPFAM" id="SSF51419">
    <property type="entry name" value="PLP-binding barrel"/>
    <property type="match status" value="1"/>
</dbReference>
<dbReference type="PROSITE" id="PS00395">
    <property type="entry name" value="ALANINE_RACEMASE"/>
    <property type="match status" value="1"/>
</dbReference>
<protein>
    <recommendedName>
        <fullName evidence="1">Alanine racemase</fullName>
        <ecNumber evidence="1">5.1.1.1</ecNumber>
    </recommendedName>
</protein>
<reference key="1">
    <citation type="journal article" date="2006" name="J. Bacteriol.">
        <title>Comparison of the genome sequence of the poultry pathogen Bordetella avium with those of B. bronchiseptica, B. pertussis, and B. parapertussis reveals extensive diversity in surface structures associated with host interaction.</title>
        <authorList>
            <person name="Sebaihia M."/>
            <person name="Preston A."/>
            <person name="Maskell D.J."/>
            <person name="Kuzmiak H."/>
            <person name="Connell T.D."/>
            <person name="King N.D."/>
            <person name="Orndorff P.E."/>
            <person name="Miyamoto D.M."/>
            <person name="Thomson N.R."/>
            <person name="Harris D."/>
            <person name="Goble A."/>
            <person name="Lord A."/>
            <person name="Murphy L."/>
            <person name="Quail M.A."/>
            <person name="Rutter S."/>
            <person name="Squares R."/>
            <person name="Squares S."/>
            <person name="Woodward J."/>
            <person name="Parkhill J."/>
            <person name="Temple L.M."/>
        </authorList>
    </citation>
    <scope>NUCLEOTIDE SEQUENCE [LARGE SCALE GENOMIC DNA]</scope>
    <source>
        <strain>197N</strain>
    </source>
</reference>
<feature type="chain" id="PRO_1000065971" description="Alanine racemase">
    <location>
        <begin position="1"/>
        <end position="374"/>
    </location>
</feature>
<feature type="active site" description="Proton acceptor; specific for D-alanine" evidence="1">
    <location>
        <position position="44"/>
    </location>
</feature>
<feature type="active site" description="Proton acceptor; specific for L-alanine" evidence="1">
    <location>
        <position position="269"/>
    </location>
</feature>
<feature type="binding site" evidence="1">
    <location>
        <position position="139"/>
    </location>
    <ligand>
        <name>substrate</name>
    </ligand>
</feature>
<feature type="binding site" evidence="1">
    <location>
        <position position="317"/>
    </location>
    <ligand>
        <name>substrate</name>
    </ligand>
</feature>
<feature type="modified residue" description="N6-(pyridoxal phosphate)lysine" evidence="1">
    <location>
        <position position="44"/>
    </location>
</feature>
<proteinExistence type="inferred from homology"/>
<gene>
    <name type="primary">alr</name>
    <name type="ordered locus">BAV2416</name>
</gene>
<comment type="function">
    <text evidence="1">Catalyzes the interconversion of L-alanine and D-alanine. May also act on other amino acids.</text>
</comment>
<comment type="catalytic activity">
    <reaction evidence="1">
        <text>L-alanine = D-alanine</text>
        <dbReference type="Rhea" id="RHEA:20249"/>
        <dbReference type="ChEBI" id="CHEBI:57416"/>
        <dbReference type="ChEBI" id="CHEBI:57972"/>
        <dbReference type="EC" id="5.1.1.1"/>
    </reaction>
</comment>
<comment type="cofactor">
    <cofactor evidence="1">
        <name>pyridoxal 5'-phosphate</name>
        <dbReference type="ChEBI" id="CHEBI:597326"/>
    </cofactor>
</comment>
<comment type="pathway">
    <text evidence="1">Amino-acid biosynthesis; D-alanine biosynthesis; D-alanine from L-alanine: step 1/1.</text>
</comment>
<comment type="similarity">
    <text evidence="1">Belongs to the alanine racemase family.</text>
</comment>
<keyword id="KW-0413">Isomerase</keyword>
<keyword id="KW-0663">Pyridoxal phosphate</keyword>
<keyword id="KW-1185">Reference proteome</keyword>
<name>ALR_BORA1</name>
<organism>
    <name type="scientific">Bordetella avium (strain 197N)</name>
    <dbReference type="NCBI Taxonomy" id="360910"/>
    <lineage>
        <taxon>Bacteria</taxon>
        <taxon>Pseudomonadati</taxon>
        <taxon>Pseudomonadota</taxon>
        <taxon>Betaproteobacteria</taxon>
        <taxon>Burkholderiales</taxon>
        <taxon>Alcaligenaceae</taxon>
        <taxon>Bordetella</taxon>
    </lineage>
</organism>
<sequence>MPRPIFALISPTALRHNLSVVRQHLNRAAVAAGGVPPSIWAVIKANAYGHGIERALRAFSEAQGLAMLDIEEAVRCREAGWAGPILLLEGFFTPQDIDLLDRYHISTAVHCQEQLDMLARARPSHRINAMVKLNSGMNRLGFSPQAYGAAFEAAQALMRDGVLGSVGKMTHFATADGPQGPQWQWEVFQAATQGLPGPVSVCNSAATLRYPELAAGPGATHWVRPGICLYGASPFSDTPAAAFGLRPAMTLRAEIIGVQQVSPGQTVGYGATFAASKAMRVGVVSCGYADGYPRHCATGTPVTVNGVATRLLGRVSMDMMMVDLDPVPAAGVGAPVVLWGEGGPDVDAVAAAGGTIGYELLTALAARVPVRDAS</sequence>
<accession>Q2KXU7</accession>